<proteinExistence type="inferred from homology"/>
<feature type="chain" id="PRO_1000124520" description="Transcriptional repressor NrdR">
    <location>
        <begin position="1"/>
        <end position="156"/>
    </location>
</feature>
<feature type="domain" description="ATP-cone" evidence="1">
    <location>
        <begin position="49"/>
        <end position="139"/>
    </location>
</feature>
<feature type="zinc finger region" evidence="1">
    <location>
        <begin position="3"/>
        <end position="34"/>
    </location>
</feature>
<keyword id="KW-0067">ATP-binding</keyword>
<keyword id="KW-0238">DNA-binding</keyword>
<keyword id="KW-0479">Metal-binding</keyword>
<keyword id="KW-0547">Nucleotide-binding</keyword>
<keyword id="KW-0678">Repressor</keyword>
<keyword id="KW-0804">Transcription</keyword>
<keyword id="KW-0805">Transcription regulation</keyword>
<keyword id="KW-0862">Zinc</keyword>
<keyword id="KW-0863">Zinc-finger</keyword>
<protein>
    <recommendedName>
        <fullName evidence="1">Transcriptional repressor NrdR</fullName>
    </recommendedName>
</protein>
<gene>
    <name evidence="1" type="primary">nrdR</name>
    <name type="ordered locus">Bsph_4106</name>
</gene>
<organism>
    <name type="scientific">Lysinibacillus sphaericus (strain C3-41)</name>
    <dbReference type="NCBI Taxonomy" id="444177"/>
    <lineage>
        <taxon>Bacteria</taxon>
        <taxon>Bacillati</taxon>
        <taxon>Bacillota</taxon>
        <taxon>Bacilli</taxon>
        <taxon>Bacillales</taxon>
        <taxon>Bacillaceae</taxon>
        <taxon>Lysinibacillus</taxon>
    </lineage>
</organism>
<evidence type="ECO:0000255" key="1">
    <source>
        <dbReference type="HAMAP-Rule" id="MF_00440"/>
    </source>
</evidence>
<accession>B1HWD3</accession>
<name>NRDR_LYSSC</name>
<comment type="function">
    <text evidence="1">Negatively regulates transcription of bacterial ribonucleotide reductase nrd genes and operons by binding to NrdR-boxes.</text>
</comment>
<comment type="cofactor">
    <cofactor evidence="1">
        <name>Zn(2+)</name>
        <dbReference type="ChEBI" id="CHEBI:29105"/>
    </cofactor>
    <text evidence="1">Binds 1 zinc ion.</text>
</comment>
<comment type="similarity">
    <text evidence="1">Belongs to the NrdR family.</text>
</comment>
<sequence length="156" mass="18330">MRCPSCQFNGTRVVDSRPVDDNKEIRRRRECESCGFRFTTFEKIEETPLVVVKKEGSREEFSREKVLRGLIRACEKRPVALDILEQLVLSIEKDLRRIGNSEVRSEDVGELVMDRLAKIDEVAYVRFASVYRQFKDINVFIEEIKDIIQRQTEQKS</sequence>
<reference key="1">
    <citation type="journal article" date="2008" name="J. Bacteriol.">
        <title>Complete genome sequence of the mosquitocidal bacterium Bacillus sphaericus C3-41 and comparison with those of closely related Bacillus species.</title>
        <authorList>
            <person name="Hu X."/>
            <person name="Fan W."/>
            <person name="Han B."/>
            <person name="Liu H."/>
            <person name="Zheng D."/>
            <person name="Li Q."/>
            <person name="Dong W."/>
            <person name="Yan J."/>
            <person name="Gao M."/>
            <person name="Berry C."/>
            <person name="Yuan Z."/>
        </authorList>
    </citation>
    <scope>NUCLEOTIDE SEQUENCE [LARGE SCALE GENOMIC DNA]</scope>
    <source>
        <strain>C3-41</strain>
    </source>
</reference>
<dbReference type="EMBL" id="CP000817">
    <property type="protein sequence ID" value="ACA41572.1"/>
    <property type="molecule type" value="Genomic_DNA"/>
</dbReference>
<dbReference type="RefSeq" id="WP_008176873.1">
    <property type="nucleotide sequence ID" value="NC_010382.1"/>
</dbReference>
<dbReference type="SMR" id="B1HWD3"/>
<dbReference type="EnsemblBacteria" id="ACA41572">
    <property type="protein sequence ID" value="ACA41572"/>
    <property type="gene ID" value="Bsph_4106"/>
</dbReference>
<dbReference type="GeneID" id="29441078"/>
<dbReference type="KEGG" id="lsp:Bsph_4106"/>
<dbReference type="HOGENOM" id="CLU_108412_0_0_9"/>
<dbReference type="Proteomes" id="UP000002164">
    <property type="component" value="Chromosome"/>
</dbReference>
<dbReference type="GO" id="GO:0005524">
    <property type="term" value="F:ATP binding"/>
    <property type="evidence" value="ECO:0007669"/>
    <property type="project" value="UniProtKB-KW"/>
</dbReference>
<dbReference type="GO" id="GO:0003677">
    <property type="term" value="F:DNA binding"/>
    <property type="evidence" value="ECO:0007669"/>
    <property type="project" value="UniProtKB-KW"/>
</dbReference>
<dbReference type="GO" id="GO:0008270">
    <property type="term" value="F:zinc ion binding"/>
    <property type="evidence" value="ECO:0007669"/>
    <property type="project" value="UniProtKB-UniRule"/>
</dbReference>
<dbReference type="GO" id="GO:0045892">
    <property type="term" value="P:negative regulation of DNA-templated transcription"/>
    <property type="evidence" value="ECO:0007669"/>
    <property type="project" value="UniProtKB-UniRule"/>
</dbReference>
<dbReference type="HAMAP" id="MF_00440">
    <property type="entry name" value="NrdR"/>
    <property type="match status" value="1"/>
</dbReference>
<dbReference type="InterPro" id="IPR005144">
    <property type="entry name" value="ATP-cone_dom"/>
</dbReference>
<dbReference type="InterPro" id="IPR055173">
    <property type="entry name" value="NrdR-like_N"/>
</dbReference>
<dbReference type="InterPro" id="IPR003796">
    <property type="entry name" value="RNR_NrdR-like"/>
</dbReference>
<dbReference type="NCBIfam" id="TIGR00244">
    <property type="entry name" value="transcriptional regulator NrdR"/>
    <property type="match status" value="1"/>
</dbReference>
<dbReference type="PANTHER" id="PTHR30455">
    <property type="entry name" value="TRANSCRIPTIONAL REPRESSOR NRDR"/>
    <property type="match status" value="1"/>
</dbReference>
<dbReference type="PANTHER" id="PTHR30455:SF2">
    <property type="entry name" value="TRANSCRIPTIONAL REPRESSOR NRDR"/>
    <property type="match status" value="1"/>
</dbReference>
<dbReference type="Pfam" id="PF03477">
    <property type="entry name" value="ATP-cone"/>
    <property type="match status" value="1"/>
</dbReference>
<dbReference type="Pfam" id="PF22811">
    <property type="entry name" value="Zn_ribbon_NrdR"/>
    <property type="match status" value="1"/>
</dbReference>
<dbReference type="PROSITE" id="PS51161">
    <property type="entry name" value="ATP_CONE"/>
    <property type="match status" value="1"/>
</dbReference>